<reference key="1">
    <citation type="journal article" date="1987" name="J. Mol. Biol.">
        <title>Nucleotide sequence and comparative analysis of the human papillomavirus type 18 genome. Phylogeny of papillomaviruses and repeated structure of the E6 and E7 gene products.</title>
        <authorList>
            <person name="Cole S.T."/>
            <person name="Danos O."/>
        </authorList>
    </citation>
    <scope>NUCLEOTIDE SEQUENCE [GENOMIC DNA]</scope>
</reference>
<reference key="2">
    <citation type="journal article" date="1986" name="J. Gen. Virol.">
        <title>The expression of human papillomavirus type 18 E6 protein in bacteria and the production of anti-E6 antibodies.</title>
        <authorList>
            <person name="Matlashewski G."/>
            <person name="Banks L."/>
            <person name="Wu-Liao J."/>
            <person name="Spence P."/>
            <person name="Pim D."/>
            <person name="Crawford L."/>
        </authorList>
    </citation>
    <scope>NUCLEOTIDE SEQUENCE [GENOMIC DNA]</scope>
</reference>
<reference key="3">
    <citation type="journal article" date="1988" name="J. Virol.">
        <title>Nucleotide sequences of cDNAs for human papillomavirus type 18 transcripts in HeLa cells.</title>
        <authorList>
            <person name="Inagaki Y."/>
            <person name="Tsunokawa Y."/>
            <person name="Takebe N."/>
            <person name="Nawa H."/>
            <person name="Nakanishi S."/>
            <person name="Terada M."/>
            <person name="Sugimura T."/>
        </authorList>
    </citation>
    <scope>NUCLEOTIDE SEQUENCE [MRNA]</scope>
</reference>
<reference key="4">
    <citation type="journal article" date="1986" name="EMBO J.">
        <title>Different human cervical carcinoma cell lines show similar transcription patterns of human papillomavirus type 18 early genes.</title>
        <authorList>
            <person name="Schneider-Gaedicke A."/>
            <person name="Schwarz E."/>
        </authorList>
    </citation>
    <scope>NUCLEOTIDE SEQUENCE [GENOMIC DNA]</scope>
</reference>
<reference key="5">
    <citation type="journal article" date="1987" name="EMBO J.">
        <title>Identification of early proteins of the human papilloma viruses type 16 (HPV 16) and type 18 (HPV 18) in cervical carcinoma cells.</title>
        <authorList>
            <person name="Seedorf K."/>
            <person name="Oltersdorf T."/>
            <person name="Kraemer G."/>
            <person name="Roewekamp W."/>
        </authorList>
    </citation>
    <scope>NUCLEOTIDE SEQUENCE [GENOMIC DNA]</scope>
</reference>
<reference key="6">
    <citation type="journal article" date="1989" name="Oncogene">
        <title>E6 protein of human papillomavirus type 18 binds zinc.</title>
        <authorList>
            <person name="Grossman S.R."/>
            <person name="Laimins L.A."/>
        </authorList>
    </citation>
    <scope>ZINC-BINDING</scope>
</reference>
<reference key="7">
    <citation type="journal article" date="1993" name="Cell">
        <title>The HPV-16 E6 and E6-AP complex functions as a ubiquitin-protein ligase in the ubiquitination of p53.</title>
        <authorList>
            <person name="Scheffner M."/>
            <person name="Huibregtse J.M."/>
            <person name="Vierstra R.D."/>
            <person name="Howley P.M."/>
        </authorList>
    </citation>
    <scope>INTERACTION WITH HUMAN TP53 PROTEIN</scope>
</reference>
<reference key="8">
    <citation type="journal article" date="2000" name="J. Virol.">
        <title>Multi-PDZ domain protein MUPP1 is a cellular target for both adenovirus E4-ORF1 and high-risk papillomavirus type 18 E6 oncoproteins.</title>
        <authorList>
            <person name="Lee S.S."/>
            <person name="Glaunsinger B."/>
            <person name="Mantovani F."/>
            <person name="Banks L."/>
            <person name="Javier R.T."/>
        </authorList>
    </citation>
    <scope>INTERACTION WITH HUMAN MPDZ</scope>
    <scope>MUTAGENESIS OF 156-THR--VAL-158 AND VAL-158</scope>
</reference>
<reference key="9">
    <citation type="journal article" date="2002" name="Biochem. Biophys. Res. Commun.">
        <title>Interaction of oncogenic papillomavirus E6 proteins with fibulin-1.</title>
        <authorList>
            <person name="Du M."/>
            <person name="Fan X."/>
            <person name="Hong E."/>
            <person name="Chen J.J."/>
        </authorList>
    </citation>
    <scope>INTERACTION WITH HUMAN FBLN1</scope>
    <scope>INHIBITION OF E6-MEDIATED TRANSFORMATION</scope>
</reference>
<reference key="10">
    <citation type="journal article" date="2002" name="Oncogene">
        <title>Oncogenic human papillomavirus E6 proteins target the MAGI-2 and MAGI-3 proteins for degradation.</title>
        <authorList>
            <person name="Thomas M."/>
            <person name="Laura R."/>
            <person name="Hepner K."/>
            <person name="Guccione E."/>
            <person name="Sawyers C."/>
            <person name="Lasky L."/>
            <person name="Banks L."/>
        </authorList>
    </citation>
    <scope>INTERACTION WITH HUMAN MAGI3</scope>
</reference>
<reference key="11">
    <citation type="journal article" date="2004" name="J. Virol.">
        <title>Role of the PDZ domain-binding motif of the oncoprotein E6 in the pathogenesis of human papillomavirus type 31.</title>
        <authorList>
            <person name="Lee C."/>
            <person name="Laimins L.A."/>
        </authorList>
    </citation>
    <scope>INTERACTION WITH HUMAN MAGI3</scope>
</reference>
<reference key="12">
    <citation type="journal article" date="2004" name="Oncogene">
        <title>HPV E6 specifically targets different cellular pools of its PDZ domain-containing tumour suppressor substrates for proteasome-mediated degradation.</title>
        <authorList>
            <person name="Massimi P."/>
            <person name="Gammoh N."/>
            <person name="Thomas M."/>
            <person name="Banks L."/>
        </authorList>
    </citation>
    <scope>INTERACTION WITH HUMAN MAGI3</scope>
</reference>
<proteinExistence type="evidence at protein level"/>
<name>VE6_HPV18</name>
<dbReference type="EMBL" id="X04354">
    <property type="protein sequence ID" value="CAA27879.1"/>
    <property type="molecule type" value="Genomic_DNA"/>
</dbReference>
<dbReference type="EMBL" id="X05015">
    <property type="protein sequence ID" value="CAA28664.1"/>
    <property type="molecule type" value="Genomic_DNA"/>
</dbReference>
<dbReference type="EMBL" id="M20325">
    <property type="protein sequence ID" value="AAA99514.1"/>
    <property type="molecule type" value="mRNA"/>
</dbReference>
<dbReference type="EMBL" id="M26798">
    <property type="protein sequence ID" value="AAA46946.1"/>
    <property type="molecule type" value="Genomic_DNA"/>
</dbReference>
<dbReference type="EMBL" id="X04773">
    <property type="protein sequence ID" value="CAA28466.1"/>
    <property type="molecule type" value="Genomic_DNA"/>
</dbReference>
<dbReference type="PIR" id="A26165">
    <property type="entry name" value="W6WL18"/>
</dbReference>
<dbReference type="RefSeq" id="NP_040310.1">
    <property type="nucleotide sequence ID" value="NC_001357.1"/>
</dbReference>
<dbReference type="PDB" id="2I04">
    <property type="method" value="X-ray"/>
    <property type="resolution" value="2.15 A"/>
    <property type="chains" value="C/D=152-158"/>
</dbReference>
<dbReference type="PDB" id="2I0I">
    <property type="method" value="X-ray"/>
    <property type="resolution" value="2.80 A"/>
    <property type="chains" value="D/E/F=152-158"/>
</dbReference>
<dbReference type="PDB" id="2I0L">
    <property type="method" value="X-ray"/>
    <property type="resolution" value="2.31 A"/>
    <property type="chains" value="C/D=152-158"/>
</dbReference>
<dbReference type="PDB" id="4JOR">
    <property type="method" value="X-ray"/>
    <property type="resolution" value="1.34 A"/>
    <property type="chains" value="C/D=149-158"/>
</dbReference>
<dbReference type="PDB" id="5IC3">
    <property type="method" value="X-ray"/>
    <property type="resolution" value="1.70 A"/>
    <property type="chains" value="C/D=149-158"/>
</dbReference>
<dbReference type="PDB" id="5K4F">
    <property type="method" value="X-ray"/>
    <property type="resolution" value="1.36 A"/>
    <property type="chains" value="C/D=149-158"/>
</dbReference>
<dbReference type="PDB" id="6SJV">
    <property type="method" value="X-ray"/>
    <property type="resolution" value="2.03 A"/>
    <property type="chains" value="A=1-152"/>
</dbReference>
<dbReference type="PDB" id="6ZFD">
    <property type="method" value="X-ray"/>
    <property type="resolution" value="1.90 A"/>
    <property type="chains" value="A/B=152-158"/>
</dbReference>
<dbReference type="PDB" id="6ZFG">
    <property type="method" value="X-ray"/>
    <property type="resolution" value="1.85 A"/>
    <property type="chains" value="A/B=152-158"/>
</dbReference>
<dbReference type="PDB" id="8B82">
    <property type="method" value="X-ray"/>
    <property type="resolution" value="2.80 A"/>
    <property type="chains" value="C/D=149-158"/>
</dbReference>
<dbReference type="PDB" id="8OEP">
    <property type="method" value="X-ray"/>
    <property type="resolution" value="1.87 A"/>
    <property type="chains" value="B/D=146-158"/>
</dbReference>
<dbReference type="PDBsum" id="2I04"/>
<dbReference type="PDBsum" id="2I0I"/>
<dbReference type="PDBsum" id="2I0L"/>
<dbReference type="PDBsum" id="4JOR"/>
<dbReference type="PDBsum" id="5IC3"/>
<dbReference type="PDBsum" id="5K4F"/>
<dbReference type="PDBsum" id="6SJV"/>
<dbReference type="PDBsum" id="6ZFD"/>
<dbReference type="PDBsum" id="6ZFG"/>
<dbReference type="PDBsum" id="8B82"/>
<dbReference type="PDBsum" id="8OEP"/>
<dbReference type="SMR" id="P06463"/>
<dbReference type="DIP" id="DIP-44730N"/>
<dbReference type="ELM" id="P06463"/>
<dbReference type="IntAct" id="P06463">
    <property type="interactions" value="112"/>
</dbReference>
<dbReference type="MINT" id="P06463"/>
<dbReference type="ChEMBL" id="CHEMBL4630868"/>
<dbReference type="DNASU" id="1489088"/>
<dbReference type="GeneID" id="1489088"/>
<dbReference type="KEGG" id="vg:1489088"/>
<dbReference type="EvolutionaryTrace" id="P06463"/>
<dbReference type="Proteomes" id="UP000009109">
    <property type="component" value="Genome"/>
</dbReference>
<dbReference type="GO" id="GO:0030430">
    <property type="term" value="C:host cell cytoplasm"/>
    <property type="evidence" value="ECO:0007669"/>
    <property type="project" value="UniProtKB-SubCell"/>
</dbReference>
<dbReference type="GO" id="GO:0042025">
    <property type="term" value="C:host cell nucleus"/>
    <property type="evidence" value="ECO:0007669"/>
    <property type="project" value="UniProtKB-SubCell"/>
</dbReference>
<dbReference type="GO" id="GO:0003677">
    <property type="term" value="F:DNA binding"/>
    <property type="evidence" value="ECO:0007669"/>
    <property type="project" value="UniProtKB-UniRule"/>
</dbReference>
<dbReference type="GO" id="GO:0030165">
    <property type="term" value="F:PDZ domain binding"/>
    <property type="evidence" value="ECO:0007669"/>
    <property type="project" value="UniProtKB-UniRule"/>
</dbReference>
<dbReference type="GO" id="GO:0008270">
    <property type="term" value="F:zinc ion binding"/>
    <property type="evidence" value="ECO:0000314"/>
    <property type="project" value="BHF-UCL"/>
</dbReference>
<dbReference type="GO" id="GO:0006351">
    <property type="term" value="P:DNA-templated transcription"/>
    <property type="evidence" value="ECO:0007669"/>
    <property type="project" value="UniProtKB-UniRule"/>
</dbReference>
<dbReference type="GO" id="GO:0045892">
    <property type="term" value="P:negative regulation of DNA-templated transcription"/>
    <property type="evidence" value="ECO:0000314"/>
    <property type="project" value="CACAO"/>
</dbReference>
<dbReference type="GO" id="GO:0052150">
    <property type="term" value="P:symbiont-mediated perturbation of host apoptosis"/>
    <property type="evidence" value="ECO:0007669"/>
    <property type="project" value="UniProtKB-KW"/>
</dbReference>
<dbReference type="GO" id="GO:0039648">
    <property type="term" value="P:symbiont-mediated perturbation of host ubiquitin-like protein modification"/>
    <property type="evidence" value="ECO:0007669"/>
    <property type="project" value="UniProtKB-UniRule"/>
</dbReference>
<dbReference type="GO" id="GO:0039548">
    <property type="term" value="P:symbiont-mediated suppression of host cytoplasmic pattern recognition receptor signaling pathway via inhibition of IRF3 activity"/>
    <property type="evidence" value="ECO:0007669"/>
    <property type="project" value="UniProtKB-UniRule"/>
</dbReference>
<dbReference type="GO" id="GO:0039502">
    <property type="term" value="P:symbiont-mediated suppression of host type I interferon-mediated signaling pathway"/>
    <property type="evidence" value="ECO:0007669"/>
    <property type="project" value="UniProtKB-UniRule"/>
</dbReference>
<dbReference type="FunFam" id="3.30.240.40:FF:000001">
    <property type="entry name" value="Protein E6"/>
    <property type="match status" value="1"/>
</dbReference>
<dbReference type="FunFam" id="3.30.240.40:FF:000002">
    <property type="entry name" value="Protein E6"/>
    <property type="match status" value="1"/>
</dbReference>
<dbReference type="Gene3D" id="3.30.240.40">
    <property type="entry name" value="E6 early regulatory protein"/>
    <property type="match status" value="2"/>
</dbReference>
<dbReference type="HAMAP" id="MF_04006">
    <property type="entry name" value="HPV_E6"/>
    <property type="match status" value="1"/>
</dbReference>
<dbReference type="InterPro" id="IPR001334">
    <property type="entry name" value="E6"/>
</dbReference>
<dbReference type="InterPro" id="IPR038575">
    <property type="entry name" value="E6_sf"/>
</dbReference>
<dbReference type="Pfam" id="PF00518">
    <property type="entry name" value="E6"/>
    <property type="match status" value="1"/>
</dbReference>
<dbReference type="SUPFAM" id="SSF161229">
    <property type="entry name" value="E6 C-terminal domain-like"/>
    <property type="match status" value="2"/>
</dbReference>
<gene>
    <name evidence="1" type="primary">E6</name>
</gene>
<protein>
    <recommendedName>
        <fullName evidence="1">Protein E6</fullName>
    </recommendedName>
</protein>
<accession>P06463</accession>
<comment type="function">
    <text evidence="1">Plays a major role in the induction and maintenance of cellular transformation. Acts mainly as an oncoprotein by stimulating the destruction of many host cell key regulatory proteins. E6 associates with host UBE3A/E6-AP ubiquitin-protein ligase, and inactivates tumor suppressors TP53 and TP73 by targeting them to the 26S proteasome for degradation. In turn, DNA damage and chromosomal instabilities increase and lead to cell proliferation and cancer development. The complex E6/E6AP targets several other substrates to degradation via the proteasome including host DLG1 or NFX1, a repressor of human telomerase reverse transcriptase (hTERT). The resulting increased expression of hTERT prevents the shortening of telomere length leading to cell immortalization. Other cellular targets including BAK1, Fas-associated death domain-containing protein (FADD) and procaspase 8, are degraded by E6/E6AP causing inhibition of apoptosis. E6 also inhibits immune response by interacting with host IRF3 and TYK2. These interactions prevent IRF3 transcriptional activities and inhibit TYK2-mediated JAK-STAT activation by interferon alpha resulting in inhibition of the interferon signaling pathway.</text>
</comment>
<comment type="subunit">
    <text evidence="1 2 3 4 5 6 7">Forms homodimers. Interacts with ubiquitin-protein ligase UBE3A/E6-AP and thus forms a complex with human TP53. Interacts with human NFX1 and MAGI3. Interacts with human IRF3; this interaction inhibits the establishment of antiviral state. Interacts with human TYK2; this interaction inhibits JAK-STAT activation by interferon alpha. Interacts with host DLG1; this interaction leads to the proteasomal degradation of DLG1.</text>
</comment>
<comment type="interaction">
    <interactant intactId="EBI-1186926">
        <id>P06463</id>
    </interactant>
    <interactant intactId="EBI-357481">
        <id>Q12959</id>
        <label>DLG1</label>
    </interactant>
    <organismsDiffer>true</organismsDiffer>
    <experiments>4</experiments>
</comment>
<comment type="interaction">
    <interactant intactId="EBI-1186926">
        <id>P06463</id>
    </interactant>
    <interactant intactId="EBI-514290">
        <id>Q811D0</id>
        <label>Dlg1</label>
    </interactant>
    <organismsDiffer>true</organismsDiffer>
    <experiments>2</experiments>
</comment>
<comment type="interaction">
    <interactant intactId="EBI-1186926">
        <id>P06463</id>
    </interactant>
    <interactant intactId="EBI-924464">
        <id>Q96QZ7</id>
        <label>MAGI1</label>
    </interactant>
    <organismsDiffer>true</organismsDiffer>
    <experiments>4</experiments>
</comment>
<comment type="interaction">
    <interactant intactId="EBI-1186926">
        <id>P06463</id>
    </interactant>
    <interactant intactId="EBI-355924">
        <id>P33993</id>
        <label>MCM7</label>
    </interactant>
    <organismsDiffer>true</organismsDiffer>
    <experiments>2</experiments>
</comment>
<comment type="interaction">
    <interactant intactId="EBI-1186926">
        <id>P06463</id>
    </interactant>
    <interactant intactId="EBI-1047946">
        <id>P26045</id>
        <label>PTPN3</label>
    </interactant>
    <organismsDiffer>true</organismsDiffer>
    <experiments>4</experiments>
</comment>
<comment type="interaction">
    <interactant intactId="EBI-1186926">
        <id>P06463</id>
    </interactant>
    <interactant intactId="EBI-357345">
        <id>Q14160</id>
        <label>SCRIB</label>
    </interactant>
    <organismsDiffer>true</organismsDiffer>
    <experiments>4</experiments>
</comment>
<comment type="interaction">
    <interactant intactId="EBI-1186926">
        <id>P06463</id>
    </interactant>
    <interactant intactId="EBI-366083">
        <id>P04637</id>
        <label>TP53</label>
    </interactant>
    <organismsDiffer>true</organismsDiffer>
    <experiments>3</experiments>
</comment>
<comment type="interaction">
    <interactant intactId="EBI-1186926">
        <id>P06463</id>
    </interactant>
    <interactant intactId="EBI-954357">
        <id>Q05086</id>
        <label>UBE3A</label>
    </interactant>
    <organismsDiffer>true</organismsDiffer>
    <experiments>7</experiments>
</comment>
<comment type="subcellular location">
    <subcellularLocation>
        <location evidence="1">Host cytoplasm</location>
    </subcellularLocation>
    <subcellularLocation>
        <location evidence="1">Host nucleus</location>
    </subcellularLocation>
</comment>
<comment type="miscellaneous">
    <text evidence="1">Belongs to the high risk human alphapapillomavirus family. The cancer-causing human papillomavirus E6 protein has a unique carboxy terminal PDZ domain containing substrate.</text>
</comment>
<comment type="similarity">
    <text evidence="8">Belongs to the papillomaviridae E6 protein family.</text>
</comment>
<evidence type="ECO:0000255" key="1">
    <source>
        <dbReference type="HAMAP-Rule" id="MF_04006"/>
    </source>
</evidence>
<evidence type="ECO:0000269" key="2">
    <source>
    </source>
</evidence>
<evidence type="ECO:0000269" key="3">
    <source>
    </source>
</evidence>
<evidence type="ECO:0000269" key="4">
    <source>
    </source>
</evidence>
<evidence type="ECO:0000269" key="5">
    <source>
    </source>
</evidence>
<evidence type="ECO:0000269" key="6">
    <source>
    </source>
</evidence>
<evidence type="ECO:0000269" key="7">
    <source>
    </source>
</evidence>
<evidence type="ECO:0000305" key="8"/>
<evidence type="ECO:0007829" key="9">
    <source>
        <dbReference type="PDB" id="4JOR"/>
    </source>
</evidence>
<evidence type="ECO:0007829" key="10">
    <source>
        <dbReference type="PDB" id="6SJV"/>
    </source>
</evidence>
<feature type="chain" id="PRO_0000133338" description="Protein E6">
    <location>
        <begin position="1"/>
        <end position="158"/>
    </location>
</feature>
<feature type="zinc finger region" evidence="1">
    <location>
        <begin position="32"/>
        <end position="68"/>
    </location>
</feature>
<feature type="zinc finger region" evidence="1">
    <location>
        <begin position="105"/>
        <end position="141"/>
    </location>
</feature>
<feature type="short sequence motif" description="PDZ-binding domain" evidence="1">
    <location>
        <begin position="156"/>
        <end position="158"/>
    </location>
</feature>
<feature type="mutagenesis site" description="Complete loss of binding to MPDZ protein." evidence="2">
    <original>TQV</original>
    <variation>DQA</variation>
    <location>
        <begin position="156"/>
        <end position="158"/>
    </location>
</feature>
<feature type="mutagenesis site" description="Complete loss of binding to MPDZ protein." evidence="2">
    <original>V</original>
    <variation>A</variation>
    <location>
        <position position="158"/>
    </location>
</feature>
<feature type="sequence conflict" description="In Ref. 4; AAA46946." evidence="8" ref="4">
    <original>N</original>
    <variation>S</variation>
    <location>
        <position position="22"/>
    </location>
</feature>
<feature type="helix" evidence="10">
    <location>
        <begin position="3"/>
        <end position="5"/>
    </location>
</feature>
<feature type="turn" evidence="10">
    <location>
        <begin position="7"/>
        <end position="9"/>
    </location>
</feature>
<feature type="helix" evidence="10">
    <location>
        <begin position="14"/>
        <end position="20"/>
    </location>
</feature>
<feature type="turn" evidence="10">
    <location>
        <begin position="25"/>
        <end position="27"/>
    </location>
</feature>
<feature type="turn" evidence="10">
    <location>
        <begin position="33"/>
        <end position="35"/>
    </location>
</feature>
<feature type="helix" evidence="10">
    <location>
        <begin position="41"/>
        <end position="49"/>
    </location>
</feature>
<feature type="strand" evidence="10">
    <location>
        <begin position="55"/>
        <end position="57"/>
    </location>
</feature>
<feature type="strand" evidence="10">
    <location>
        <begin position="60"/>
        <end position="63"/>
    </location>
</feature>
<feature type="helix" evidence="10">
    <location>
        <begin position="66"/>
        <end position="79"/>
    </location>
</feature>
<feature type="strand" evidence="10">
    <location>
        <begin position="81"/>
        <end position="85"/>
    </location>
</feature>
<feature type="helix" evidence="10">
    <location>
        <begin position="87"/>
        <end position="94"/>
    </location>
</feature>
<feature type="turn" evidence="10">
    <location>
        <begin position="98"/>
        <end position="100"/>
    </location>
</feature>
<feature type="turn" evidence="10">
    <location>
        <begin position="106"/>
        <end position="108"/>
    </location>
</feature>
<feature type="helix" evidence="10">
    <location>
        <begin position="114"/>
        <end position="122"/>
    </location>
</feature>
<feature type="strand" evidence="10">
    <location>
        <begin position="127"/>
        <end position="130"/>
    </location>
</feature>
<feature type="strand" evidence="10">
    <location>
        <begin position="133"/>
        <end position="136"/>
    </location>
</feature>
<feature type="helix" evidence="10">
    <location>
        <begin position="139"/>
        <end position="142"/>
    </location>
</feature>
<feature type="strand" evidence="9">
    <location>
        <begin position="155"/>
        <end position="158"/>
    </location>
</feature>
<sequence>MARFEDPTRRPYKLPDLCTELNTSLQDIEITCVYCKTVLELTEVFEFAFKDLFVVYRDSIPHAACHKCIDFYSRIRELRHYSDSVYGDTLEKLTNTGLYNLLIRCLRCQKPLNPAEKLRHLNEKRRFHNIAGHYRGQCHSCCNRARQERLQRRRETQV</sequence>
<organismHost>
    <name type="scientific">Homo sapiens</name>
    <name type="common">Human</name>
    <dbReference type="NCBI Taxonomy" id="9606"/>
</organismHost>
<organism>
    <name type="scientific">Human papillomavirus type 18</name>
    <dbReference type="NCBI Taxonomy" id="333761"/>
    <lineage>
        <taxon>Viruses</taxon>
        <taxon>Monodnaviria</taxon>
        <taxon>Shotokuvirae</taxon>
        <taxon>Cossaviricota</taxon>
        <taxon>Papovaviricetes</taxon>
        <taxon>Zurhausenvirales</taxon>
        <taxon>Papillomaviridae</taxon>
        <taxon>Firstpapillomavirinae</taxon>
        <taxon>Alphapapillomavirus</taxon>
        <taxon>Alphapapillomavirus 7</taxon>
    </lineage>
</organism>
<keyword id="KW-0002">3D-structure</keyword>
<keyword id="KW-0010">Activator</keyword>
<keyword id="KW-0238">DNA-binding</keyword>
<keyword id="KW-0244">Early protein</keyword>
<keyword id="KW-1035">Host cytoplasm</keyword>
<keyword id="KW-1048">Host nucleus</keyword>
<keyword id="KW-0945">Host-virus interaction</keyword>
<keyword id="KW-1090">Inhibition of host innate immune response by virus</keyword>
<keyword id="KW-1092">Inhibition of host IRF3 by virus</keyword>
<keyword id="KW-1113">Inhibition of host RLR pathway by virus</keyword>
<keyword id="KW-0479">Metal-binding</keyword>
<keyword id="KW-1119">Modulation of host cell apoptosis by virus</keyword>
<keyword id="KW-0553">Oncogene</keyword>
<keyword id="KW-1185">Reference proteome</keyword>
<keyword id="KW-0804">Transcription</keyword>
<keyword id="KW-0805">Transcription regulation</keyword>
<keyword id="KW-0899">Viral immunoevasion</keyword>
<keyword id="KW-0862">Zinc</keyword>
<keyword id="KW-0863">Zinc-finger</keyword>